<keyword id="KW-0998">Cell outer membrane</keyword>
<keyword id="KW-0472">Membrane</keyword>
<keyword id="KW-1185">Reference proteome</keyword>
<keyword id="KW-0732">Signal</keyword>
<sequence>MPPKTLFPLVPACDAAPRKKRLAVALLAVPGLVPAVSQAQLSGAAAEPQAFGSPWDLRLAPQLDEHPQKQGGKPATFVLADHTNGTAEQDLAAKGAAEIRRGNAAVKADAIHYDQDTDMADAYGKVTVANGGTTFSGPEAHLKVEANQGFMTTPKYRFTATGGTGSAERVQLLDSERSVFTNGTYTGCQCSTNPAWYIKGSEFDFDTGADEGVARNGVLFFQGVPLFGSPWLTFPLSGDRRSGFLPPTFSPFSSTNGFELSLPYYFNIAPNRDLTITPHIISKRGIFTQATFRYLSTNYSGTLTGEYLPDDRVAHRNRYAIFWQHQQNFGNGFGGYVYYNKVSDNLYPEELGSTNQFVNGVQTVYQQEAGLTYNNGPWSVLGRYQHWQTLPPSAAPYGREPQLNVKYTKYNVGGFDFGAEADYSRFRITTADQPEGDRVMFNPYVSYGLYGPGYFFVPKAQLHMASYDLTTTTGGVPGQPKRFTYSIPTLSLDTGLVFDRSVRLFGQDFIQTLEPRLFYVYTPYRNQSNAPLFDTAVSDFGLAEIFTPNTFVGNDRIADANRLTAALTTRFINPTTGDERARFVIAQQYYFTDQRVTLLPTEAPATARHSDLILGASVKLGAGFASETAFQYNVDNNQLVKSSVGFGYSPGERRVINVGYRYTRQNPTLSNEPINQILMSAQWPLTRRLYAVGRLNYDLASSRVVDGLVGFQYDADCWAFGVGVQRYANGLNSSGQQNSSTRVLAQLVLKGLTSIDNGLVTAFRAGVQGYTPLPPAPAPLSRFSNYD</sequence>
<evidence type="ECO:0000255" key="1">
    <source>
        <dbReference type="HAMAP-Rule" id="MF_01411"/>
    </source>
</evidence>
<feature type="signal peptide" evidence="1">
    <location>
        <begin position="1"/>
        <end position="39"/>
    </location>
</feature>
<feature type="chain" id="PRO_0000281593" description="LPS-assembly protein LptD">
    <location>
        <begin position="40"/>
        <end position="787"/>
    </location>
</feature>
<accession>Q63X79</accession>
<comment type="function">
    <text evidence="1">Together with LptE, is involved in the assembly of lipopolysaccharide (LPS) at the surface of the outer membrane.</text>
</comment>
<comment type="subunit">
    <text evidence="1">Component of the lipopolysaccharide transport and assembly complex. Interacts with LptE and LptA.</text>
</comment>
<comment type="subcellular location">
    <subcellularLocation>
        <location evidence="1">Cell outer membrane</location>
    </subcellularLocation>
</comment>
<comment type="similarity">
    <text evidence="1">Belongs to the LptD family.</text>
</comment>
<dbReference type="EMBL" id="BX571965">
    <property type="protein sequence ID" value="CAH34651.1"/>
    <property type="molecule type" value="Genomic_DNA"/>
</dbReference>
<dbReference type="RefSeq" id="WP_004189876.1">
    <property type="nucleotide sequence ID" value="NZ_CP009538.1"/>
</dbReference>
<dbReference type="RefSeq" id="YP_107287.1">
    <property type="nucleotide sequence ID" value="NC_006350.1"/>
</dbReference>
<dbReference type="SMR" id="Q63X79"/>
<dbReference type="STRING" id="272560.BPSL0658"/>
<dbReference type="KEGG" id="bps:BPSL0658"/>
<dbReference type="PATRIC" id="fig|272560.51.peg.962"/>
<dbReference type="eggNOG" id="COG1452">
    <property type="taxonomic scope" value="Bacteria"/>
</dbReference>
<dbReference type="Proteomes" id="UP000000605">
    <property type="component" value="Chromosome 1"/>
</dbReference>
<dbReference type="GO" id="GO:0009279">
    <property type="term" value="C:cell outer membrane"/>
    <property type="evidence" value="ECO:0007669"/>
    <property type="project" value="UniProtKB-SubCell"/>
</dbReference>
<dbReference type="GO" id="GO:1990351">
    <property type="term" value="C:transporter complex"/>
    <property type="evidence" value="ECO:0007669"/>
    <property type="project" value="TreeGrafter"/>
</dbReference>
<dbReference type="GO" id="GO:0043165">
    <property type="term" value="P:Gram-negative-bacterium-type cell outer membrane assembly"/>
    <property type="evidence" value="ECO:0007669"/>
    <property type="project" value="UniProtKB-UniRule"/>
</dbReference>
<dbReference type="GO" id="GO:0015920">
    <property type="term" value="P:lipopolysaccharide transport"/>
    <property type="evidence" value="ECO:0007669"/>
    <property type="project" value="InterPro"/>
</dbReference>
<dbReference type="HAMAP" id="MF_01411">
    <property type="entry name" value="LPS_assembly_LptD"/>
    <property type="match status" value="1"/>
</dbReference>
<dbReference type="InterPro" id="IPR020889">
    <property type="entry name" value="LipoPS_assembly_LptD"/>
</dbReference>
<dbReference type="InterPro" id="IPR050218">
    <property type="entry name" value="LptD"/>
</dbReference>
<dbReference type="InterPro" id="IPR007543">
    <property type="entry name" value="LptD_C"/>
</dbReference>
<dbReference type="PANTHER" id="PTHR30189">
    <property type="entry name" value="LPS-ASSEMBLY PROTEIN"/>
    <property type="match status" value="1"/>
</dbReference>
<dbReference type="PANTHER" id="PTHR30189:SF1">
    <property type="entry name" value="LPS-ASSEMBLY PROTEIN LPTD"/>
    <property type="match status" value="1"/>
</dbReference>
<dbReference type="Pfam" id="PF04453">
    <property type="entry name" value="LptD"/>
    <property type="match status" value="1"/>
</dbReference>
<organism>
    <name type="scientific">Burkholderia pseudomallei (strain K96243)</name>
    <dbReference type="NCBI Taxonomy" id="272560"/>
    <lineage>
        <taxon>Bacteria</taxon>
        <taxon>Pseudomonadati</taxon>
        <taxon>Pseudomonadota</taxon>
        <taxon>Betaproteobacteria</taxon>
        <taxon>Burkholderiales</taxon>
        <taxon>Burkholderiaceae</taxon>
        <taxon>Burkholderia</taxon>
        <taxon>pseudomallei group</taxon>
    </lineage>
</organism>
<protein>
    <recommendedName>
        <fullName evidence="1">LPS-assembly protein LptD</fullName>
    </recommendedName>
</protein>
<reference key="1">
    <citation type="journal article" date="2004" name="Proc. Natl. Acad. Sci. U.S.A.">
        <title>Genomic plasticity of the causative agent of melioidosis, Burkholderia pseudomallei.</title>
        <authorList>
            <person name="Holden M.T.G."/>
            <person name="Titball R.W."/>
            <person name="Peacock S.J."/>
            <person name="Cerdeno-Tarraga A.-M."/>
            <person name="Atkins T."/>
            <person name="Crossman L.C."/>
            <person name="Pitt T."/>
            <person name="Churcher C."/>
            <person name="Mungall K.L."/>
            <person name="Bentley S.D."/>
            <person name="Sebaihia M."/>
            <person name="Thomson N.R."/>
            <person name="Bason N."/>
            <person name="Beacham I.R."/>
            <person name="Brooks K."/>
            <person name="Brown K.A."/>
            <person name="Brown N.F."/>
            <person name="Challis G.L."/>
            <person name="Cherevach I."/>
            <person name="Chillingworth T."/>
            <person name="Cronin A."/>
            <person name="Crossett B."/>
            <person name="Davis P."/>
            <person name="DeShazer D."/>
            <person name="Feltwell T."/>
            <person name="Fraser A."/>
            <person name="Hance Z."/>
            <person name="Hauser H."/>
            <person name="Holroyd S."/>
            <person name="Jagels K."/>
            <person name="Keith K.E."/>
            <person name="Maddison M."/>
            <person name="Moule S."/>
            <person name="Price C."/>
            <person name="Quail M.A."/>
            <person name="Rabbinowitsch E."/>
            <person name="Rutherford K."/>
            <person name="Sanders M."/>
            <person name="Simmonds M."/>
            <person name="Songsivilai S."/>
            <person name="Stevens K."/>
            <person name="Tumapa S."/>
            <person name="Vesaratchavest M."/>
            <person name="Whitehead S."/>
            <person name="Yeats C."/>
            <person name="Barrell B.G."/>
            <person name="Oyston P.C.F."/>
            <person name="Parkhill J."/>
        </authorList>
    </citation>
    <scope>NUCLEOTIDE SEQUENCE [LARGE SCALE GENOMIC DNA]</scope>
    <source>
        <strain>K96243</strain>
    </source>
</reference>
<gene>
    <name evidence="1" type="primary">lptD</name>
    <name type="synonym">imp</name>
    <name type="synonym">ostA</name>
    <name type="ordered locus">BPSL0658</name>
</gene>
<proteinExistence type="inferred from homology"/>
<name>LPTD_BURPS</name>